<reference key="1">
    <citation type="journal article" date="2008" name="Cell. Physiol. Biochem.">
        <title>KCNQ1 and KCNE1 K+ channel components are involved in early left-right patterning in Xenopus laevis embryos.</title>
        <authorList>
            <person name="Morokuma J."/>
            <person name="Blackiston D."/>
            <person name="Levin M."/>
        </authorList>
    </citation>
    <scope>NUCLEOTIDE SEQUENCE [MRNA]</scope>
</reference>
<reference key="2">
    <citation type="journal article" date="1996" name="Nature">
        <title>Coassembly of K(V)LQT1 and minK (IsK) proteins to form cardiac I(Ks) potassium channel.</title>
        <authorList>
            <person name="Sanguinetti M.C."/>
            <person name="Curran M.E."/>
            <person name="Zou A."/>
            <person name="Shen J."/>
            <person name="Spector P.S."/>
            <person name="Atkinson D.L."/>
            <person name="Keating M.T."/>
        </authorList>
    </citation>
    <scope>NUCLEOTIDE SEQUENCE [MRNA] OF 1-401</scope>
    <source>
        <tissue>Oocyte</tissue>
    </source>
</reference>
<comment type="function">
    <text evidence="1 2 3">Pore-forming subunit of the voltage-gated potassium (Kv) channel involved in the regulation of cardiomyocyte excitability and important in normal development and functions of myocardium, inner ear, stomach and colon (By similarity). Associates with KCNE beta subunits that modulates current kinetics (By similarity). Induces a voltage-dependent by rapidly activating and slowly deactivating potassium-selective outward current (By similarity). Also promotes a delayed voltage activated potassium current showing outward rectification characteristic (By similarity). During beta-adrenergic receptor stimulation participates in cardiac repolarization by associating with KCNE1 to form the I(Ks) cardiac potassium current that increases the amplitude and slows down the activation kinetics of outward potassium current I(Ks) (By similarity). When associated with KCNE3, forms the potassium channel that is important for cyclic AMP-stimulated intestinal secretion of chloride ions (By similarity). When associated with KCNE2, forms a heterooligomer complex leading to currents with an apparently instantaneous activation, a rapid deactivation process and a linear current-voltage relationship and decreases the amplitude of the outward current (By similarity). When associated with KCNE4, inhibits voltage-gated potassium channel activity (By similarity). When associated with KCNE5, this complex only conducts current upon strong and continued depolarization (By similarity).</text>
</comment>
<comment type="catalytic activity">
    <reaction evidence="1">
        <text>K(+)(in) = K(+)(out)</text>
        <dbReference type="Rhea" id="RHEA:29463"/>
        <dbReference type="ChEBI" id="CHEBI:29103"/>
    </reaction>
</comment>
<comment type="activity regulation">
    <text evidence="1">PIP2 molecule is essential to activate KCNQ channels by inducing the coupling of the voltage-sensing domain (VSD) and the pore-forming domain (PD). Upon channel activation, PIP2 disrupts the VSD-calmodulin/CALM interactions, causing the release of CALM from the VSD which triggers the opening of the gate. Calcium potentiates KCNQ1 channel current through calcium-bound CALM. Calcium-bound CALM competes with PIP2 to stabilize the channel open state.</text>
</comment>
<comment type="subunit">
    <text evidence="1">Tetramer. Heterotetramer with KCNE1; targets to the membrane raft. Interacts (via C-terminus) with CALM; forms a heterotetramer in a calcium-independent manner. Interacts with KCNE2; form a heterooligomer complex that targets to the membrane raft and leading to currents with an apparently instantaneous activation, a rapid deactivation process and a linear current-voltage relationship and decreases the amplitude of the outward current. Interacts with KCNE3; four KCNE3 molecules are bound to one KCNQ1 tetramer (4:4 KCNQ1:KCNE3 stoichiometry); alters membrane raft localization; affects KCNQ1 structure and gating properties. Interacts with KCNE4; impairs KCNQ1 localization in lipid rafts and inhibits voltage-gated potassium channel activity. Interacts with KCNE5; impairs KCNQ1 localization in lipid rafts and only conducts current upon strong and continued depolarization.</text>
</comment>
<comment type="subcellular location">
    <subcellularLocation>
        <location evidence="1">Cell membrane</location>
        <topology evidence="1">Multi-pass membrane protein</topology>
    </subcellularLocation>
    <subcellularLocation>
        <location evidence="1">Cytoplasmic vesicle membrane</location>
    </subcellularLocation>
    <subcellularLocation>
        <location evidence="1">Membrane raft</location>
    </subcellularLocation>
    <subcellularLocation>
        <location evidence="1">Endoplasmic reticulum</location>
    </subcellularLocation>
    <subcellularLocation>
        <location evidence="1">Basolateral cell membrane</location>
    </subcellularLocation>
</comment>
<comment type="domain">
    <text evidence="1">Each channel subunit contains six transmembrane segments (S1-S6) with S1-S4 forming one voltage sensing domain (VSD) and S5-S6 contributing to form one quarter of an interlocking pore-forming domain (PD).</text>
</comment>
<comment type="domain">
    <text evidence="1">The segment S6 is involved in the inhibition of voltage-gated potassium channel activity by KCNE4.</text>
</comment>
<comment type="domain">
    <text evidence="1">The CALM binding domains correspond to the first two membrane-proximal helical regions that interact with a single calmodulin/CALM molecule forming a clamp-like structure. Binding of CALM C-terminus to the first helix is calcium-independent and is essential for assembly of the structure. Binding of CALM N-terminus to the second helix is calcium-dependent and regulates electrophysiological activity of the channel.</text>
</comment>
<comment type="domain">
    <text evidence="1">The C-terminal assembly domain carries the major determinants of tetramerization and subunit assembly specificity. Its coiled-coil region is four-stranded.</text>
</comment>
<comment type="similarity">
    <text evidence="6">Belongs to the potassium channel family. KQT (TC 1.A.1.15) subfamily. Kv7.1/KCNQ1 sub-subfamily.</text>
</comment>
<comment type="sequence caution" evidence="6">
    <conflict type="erroneous initiation">
        <sequence resource="EMBL-CDS" id="AAC60042"/>
    </conflict>
    <text>Truncated N-terminus.</text>
</comment>
<accession>P70057</accession>
<accession>B1N659</accession>
<protein>
    <recommendedName>
        <fullName evidence="6">Potassium voltage-gated channel subfamily KQT member 1</fullName>
    </recommendedName>
    <alternativeName>
        <fullName evidence="7">IKs producing slow voltage-gated potassium channel subunit alpha xKvLQT1</fullName>
    </alternativeName>
    <alternativeName>
        <fullName evidence="1">KQT-like 1</fullName>
    </alternativeName>
    <alternativeName>
        <fullName evidence="1">Voltage-gated potassium channel subunit Kv7.1</fullName>
    </alternativeName>
</protein>
<gene>
    <name evidence="5" type="primary">kcnq1</name>
    <name evidence="7" type="synonym">kvlqt1</name>
</gene>
<evidence type="ECO:0000250" key="1">
    <source>
        <dbReference type="UniProtKB" id="P51787"/>
    </source>
</evidence>
<evidence type="ECO:0000250" key="2">
    <source>
        <dbReference type="UniProtKB" id="P97414"/>
    </source>
</evidence>
<evidence type="ECO:0000250" key="3">
    <source>
        <dbReference type="UniProtKB" id="Q9Z0N7"/>
    </source>
</evidence>
<evidence type="ECO:0000256" key="4">
    <source>
        <dbReference type="SAM" id="MobiDB-lite"/>
    </source>
</evidence>
<evidence type="ECO:0000303" key="5">
    <source>
    </source>
</evidence>
<evidence type="ECO:0000305" key="6"/>
<evidence type="ECO:0000305" key="7">
    <source>
    </source>
</evidence>
<organism>
    <name type="scientific">Xenopus laevis</name>
    <name type="common">African clawed frog</name>
    <dbReference type="NCBI Taxonomy" id="8355"/>
    <lineage>
        <taxon>Eukaryota</taxon>
        <taxon>Metazoa</taxon>
        <taxon>Chordata</taxon>
        <taxon>Craniata</taxon>
        <taxon>Vertebrata</taxon>
        <taxon>Euteleostomi</taxon>
        <taxon>Amphibia</taxon>
        <taxon>Batrachia</taxon>
        <taxon>Anura</taxon>
        <taxon>Pipoidea</taxon>
        <taxon>Pipidae</taxon>
        <taxon>Xenopodinae</taxon>
        <taxon>Xenopus</taxon>
        <taxon>Xenopus</taxon>
    </lineage>
</organism>
<sequence>MSSEQPAWTFGLFTPDQNKQAPLEMNENAINSLYEAIPLPQDGSSNGQRQEDRQANSFELKRETLVATDPPRPTINLDPRVSIYSGRRPLLSRTNIQGRVYNFLERPTGWKCFVYHFTVFLIVLICLIFSVLSTIQQYNNLATETLFWMEIVLVVFFGAEYVVRLWSAGCRSKYVGVWGRLRFARKPISVIDLIVVVASVIVLCVGSNGQVFATSAIRGIRFLQILRMLHVDRQGGTWRLLGSVVFIHRQELITTLYIGFLGLIFSSYFVYLAEKDAIDSSGEYQFGSYADALWWGVVTVTTIGYGDKVPQTWIGKTIASCFSVFAISFFALPAGILGSGFALKVQQKQRQKHFNRQIPAAASLIQTAWRCYAAENPDSATWKIYIRKQSRNHHLMSPSPKPKKSAMVKKKKIRTERDEGSTDKMLNIPHITYDHVADDRKNDGYSVESYENTVRKPFGFLDPSTGPFIRTSSFTDDLDMEGDTLLTPITHISELKEHHRAAIKVIRRMQYFVAKKKFQQARKPYDVRDVIEQYSQGHLNLMVRIKELQRRLDQSLGKPSLFLSVSDKVKDKGINTIGSRLNRVEDKVTQMDHKLNLITDMLHHLLTNQQGSQSIRTPHRSNSLNSENHPSRNTLPTYEQLNVPRMTQDNIS</sequence>
<proteinExistence type="evidence at protein level"/>
<name>KCNQ1_XENLA</name>
<dbReference type="EMBL" id="EF078696">
    <property type="protein sequence ID" value="ABN41465.1"/>
    <property type="molecule type" value="mRNA"/>
</dbReference>
<dbReference type="EMBL" id="U71076">
    <property type="protein sequence ID" value="AAC60042.1"/>
    <property type="status" value="ALT_INIT"/>
    <property type="molecule type" value="mRNA"/>
</dbReference>
<dbReference type="RefSeq" id="NP_001116347.1">
    <property type="nucleotide sequence ID" value="NM_001122875.1"/>
</dbReference>
<dbReference type="RefSeq" id="XP_018111889.1">
    <property type="nucleotide sequence ID" value="XM_018256400.1"/>
</dbReference>
<dbReference type="PDB" id="5VMS">
    <property type="method" value="EM"/>
    <property type="resolution" value="3.70 A"/>
    <property type="chains" value="A=66-610"/>
</dbReference>
<dbReference type="PDB" id="7TCI">
    <property type="method" value="EM"/>
    <property type="resolution" value="3.90 A"/>
    <property type="chains" value="A/C/E/G=66-610"/>
</dbReference>
<dbReference type="PDB" id="7TCP">
    <property type="method" value="EM"/>
    <property type="resolution" value="3.84 A"/>
    <property type="chains" value="A/C/E/G=66-610"/>
</dbReference>
<dbReference type="PDBsum" id="5VMS"/>
<dbReference type="PDBsum" id="7TCI"/>
<dbReference type="PDBsum" id="7TCP"/>
<dbReference type="EMDB" id="EMD-25813"/>
<dbReference type="EMDB" id="EMD-25816"/>
<dbReference type="EMDB" id="EMD-8712"/>
<dbReference type="SMR" id="P70057"/>
<dbReference type="GeneID" id="373746"/>
<dbReference type="KEGG" id="xla:373746"/>
<dbReference type="AGR" id="Xenbase:XB-GENE-5921471"/>
<dbReference type="CTD" id="373746"/>
<dbReference type="Xenbase" id="XB-GENE-5921471">
    <property type="gene designation" value="kcnq1.L"/>
</dbReference>
<dbReference type="OMA" id="APLEMNE"/>
<dbReference type="OrthoDB" id="8879391at2759"/>
<dbReference type="Proteomes" id="UP000186698">
    <property type="component" value="Chromosome 4L"/>
</dbReference>
<dbReference type="Bgee" id="373746">
    <property type="expression patterns" value="Expressed in heart and 19 other cell types or tissues"/>
</dbReference>
<dbReference type="GO" id="GO:0016323">
    <property type="term" value="C:basolateral plasma membrane"/>
    <property type="evidence" value="ECO:0000250"/>
    <property type="project" value="UniProtKB"/>
</dbReference>
<dbReference type="GO" id="GO:0005737">
    <property type="term" value="C:cytoplasm"/>
    <property type="evidence" value="ECO:0000250"/>
    <property type="project" value="UniProtKB"/>
</dbReference>
<dbReference type="GO" id="GO:0030659">
    <property type="term" value="C:cytoplasmic vesicle membrane"/>
    <property type="evidence" value="ECO:0007669"/>
    <property type="project" value="UniProtKB-SubCell"/>
</dbReference>
<dbReference type="GO" id="GO:0005783">
    <property type="term" value="C:endoplasmic reticulum"/>
    <property type="evidence" value="ECO:0007669"/>
    <property type="project" value="UniProtKB-SubCell"/>
</dbReference>
<dbReference type="GO" id="GO:0045121">
    <property type="term" value="C:membrane raft"/>
    <property type="evidence" value="ECO:0000250"/>
    <property type="project" value="UniProtKB"/>
</dbReference>
<dbReference type="GO" id="GO:0034702">
    <property type="term" value="C:monoatomic ion channel complex"/>
    <property type="evidence" value="ECO:0000250"/>
    <property type="project" value="UniProtKB"/>
</dbReference>
<dbReference type="GO" id="GO:0005886">
    <property type="term" value="C:plasma membrane"/>
    <property type="evidence" value="ECO:0000250"/>
    <property type="project" value="UniProtKB"/>
</dbReference>
<dbReference type="GO" id="GO:0008076">
    <property type="term" value="C:voltage-gated potassium channel complex"/>
    <property type="evidence" value="ECO:0000318"/>
    <property type="project" value="GO_Central"/>
</dbReference>
<dbReference type="GO" id="GO:0005516">
    <property type="term" value="F:calmodulin binding"/>
    <property type="evidence" value="ECO:0007669"/>
    <property type="project" value="UniProtKB-KW"/>
</dbReference>
<dbReference type="GO" id="GO:0005251">
    <property type="term" value="F:delayed rectifier potassium channel activity"/>
    <property type="evidence" value="ECO:0000250"/>
    <property type="project" value="UniProtKB"/>
</dbReference>
<dbReference type="GO" id="GO:0015271">
    <property type="term" value="F:outward rectifier potassium channel activity"/>
    <property type="evidence" value="ECO:0000250"/>
    <property type="project" value="UniProtKB"/>
</dbReference>
<dbReference type="GO" id="GO:0005546">
    <property type="term" value="F:phosphatidylinositol-4,5-bisphosphate binding"/>
    <property type="evidence" value="ECO:0000250"/>
    <property type="project" value="UniProtKB"/>
</dbReference>
<dbReference type="GO" id="GO:0005249">
    <property type="term" value="F:voltage-gated potassium channel activity"/>
    <property type="evidence" value="ECO:0000250"/>
    <property type="project" value="UniProtKB"/>
</dbReference>
<dbReference type="GO" id="GO:0048839">
    <property type="term" value="P:inner ear development"/>
    <property type="evidence" value="ECO:0000250"/>
    <property type="project" value="UniProtKB"/>
</dbReference>
<dbReference type="GO" id="GO:0050892">
    <property type="term" value="P:intestinal absorption"/>
    <property type="evidence" value="ECO:0000250"/>
    <property type="project" value="UniProtKB"/>
</dbReference>
<dbReference type="GO" id="GO:0086009">
    <property type="term" value="P:membrane repolarization"/>
    <property type="evidence" value="ECO:0000250"/>
    <property type="project" value="UniProtKB"/>
</dbReference>
<dbReference type="GO" id="GO:0071805">
    <property type="term" value="P:potassium ion transmembrane transport"/>
    <property type="evidence" value="ECO:0000318"/>
    <property type="project" value="GO_Central"/>
</dbReference>
<dbReference type="GO" id="GO:0060453">
    <property type="term" value="P:regulation of gastric acid secretion"/>
    <property type="evidence" value="ECO:0000250"/>
    <property type="project" value="UniProtKB"/>
</dbReference>
<dbReference type="GO" id="GO:0070293">
    <property type="term" value="P:renal absorption"/>
    <property type="evidence" value="ECO:0000250"/>
    <property type="project" value="UniProtKB"/>
</dbReference>
<dbReference type="FunFam" id="1.10.287.70:FF:000113">
    <property type="entry name" value="Potassium voltage-gated channel subfamily KQT member 1"/>
    <property type="match status" value="1"/>
</dbReference>
<dbReference type="FunFam" id="1.20.120.350:FF:000017">
    <property type="entry name" value="potassium voltage-gated channel subfamily KQT member 1"/>
    <property type="match status" value="1"/>
</dbReference>
<dbReference type="Gene3D" id="1.10.287.70">
    <property type="match status" value="1"/>
</dbReference>
<dbReference type="Gene3D" id="6.10.140.1910">
    <property type="match status" value="2"/>
</dbReference>
<dbReference type="Gene3D" id="1.20.120.350">
    <property type="entry name" value="Voltage-gated potassium channels. Chain C"/>
    <property type="match status" value="1"/>
</dbReference>
<dbReference type="InterPro" id="IPR005821">
    <property type="entry name" value="Ion_trans_dom"/>
</dbReference>
<dbReference type="InterPro" id="IPR003937">
    <property type="entry name" value="K_chnl_volt-dep_KCNQ"/>
</dbReference>
<dbReference type="InterPro" id="IPR013821">
    <property type="entry name" value="K_chnl_volt-dep_KCNQ_C"/>
</dbReference>
<dbReference type="InterPro" id="IPR005827">
    <property type="entry name" value="K_chnl_volt-dep_KCQN1"/>
</dbReference>
<dbReference type="InterPro" id="IPR027359">
    <property type="entry name" value="Volt_channel_dom_sf"/>
</dbReference>
<dbReference type="PANTHER" id="PTHR47735:SF12">
    <property type="entry name" value="POTASSIUM VOLTAGE-GATED CHANNEL SUBFAMILY KQT MEMBER 1"/>
    <property type="match status" value="1"/>
</dbReference>
<dbReference type="PANTHER" id="PTHR47735">
    <property type="entry name" value="POTASSIUM VOLTAGE-GATED CHANNEL SUBFAMILY KQT MEMBER 4"/>
    <property type="match status" value="1"/>
</dbReference>
<dbReference type="Pfam" id="PF00520">
    <property type="entry name" value="Ion_trans"/>
    <property type="match status" value="1"/>
</dbReference>
<dbReference type="Pfam" id="PF03520">
    <property type="entry name" value="KCNQ_channel"/>
    <property type="match status" value="1"/>
</dbReference>
<dbReference type="PRINTS" id="PR00169">
    <property type="entry name" value="KCHANNEL"/>
</dbReference>
<dbReference type="PRINTS" id="PR01460">
    <property type="entry name" value="KCNQ1CHANNEL"/>
</dbReference>
<dbReference type="PRINTS" id="PR01459">
    <property type="entry name" value="KCNQCHANNEL"/>
</dbReference>
<dbReference type="SUPFAM" id="SSF81324">
    <property type="entry name" value="Voltage-gated potassium channels"/>
    <property type="match status" value="1"/>
</dbReference>
<keyword id="KW-0002">3D-structure</keyword>
<keyword id="KW-0112">Calmodulin-binding</keyword>
<keyword id="KW-1003">Cell membrane</keyword>
<keyword id="KW-0968">Cytoplasmic vesicle</keyword>
<keyword id="KW-0256">Endoplasmic reticulum</keyword>
<keyword id="KW-0407">Ion channel</keyword>
<keyword id="KW-0406">Ion transport</keyword>
<keyword id="KW-0472">Membrane</keyword>
<keyword id="KW-0630">Potassium</keyword>
<keyword id="KW-0631">Potassium channel</keyword>
<keyword id="KW-0633">Potassium transport</keyword>
<keyword id="KW-1185">Reference proteome</keyword>
<keyword id="KW-0812">Transmembrane</keyword>
<keyword id="KW-1133">Transmembrane helix</keyword>
<keyword id="KW-0813">Transport</keyword>
<keyword id="KW-0851">Voltage-gated channel</keyword>
<feature type="chain" id="PRO_0000054028" description="Potassium voltage-gated channel subfamily KQT member 1">
    <location>
        <begin position="1"/>
        <end position="652"/>
    </location>
</feature>
<feature type="topological domain" description="Cytoplasmic" evidence="6">
    <location>
        <begin position="1"/>
        <end position="110"/>
    </location>
</feature>
<feature type="transmembrane region" description="Helical; Name=Segment S1" evidence="1">
    <location>
        <begin position="111"/>
        <end position="132"/>
    </location>
</feature>
<feature type="topological domain" description="Extracellular" evidence="6">
    <location>
        <begin position="133"/>
        <end position="143"/>
    </location>
</feature>
<feature type="transmembrane region" description="Helical; Name=Segment S2" evidence="1">
    <location>
        <begin position="144"/>
        <end position="166"/>
    </location>
</feature>
<feature type="topological domain" description="Cytoplasmic" evidence="6">
    <location>
        <begin position="167"/>
        <end position="182"/>
    </location>
</feature>
<feature type="transmembrane region" description="Helical; Name=Segment S3" evidence="1">
    <location>
        <begin position="183"/>
        <end position="208"/>
    </location>
</feature>
<feature type="topological domain" description="Extracellular" evidence="6">
    <location>
        <begin position="209"/>
        <end position="216"/>
    </location>
</feature>
<feature type="transmembrane region" description="Helical; Voltage-sensor; Name=Segment S4" evidence="1">
    <location>
        <begin position="217"/>
        <end position="232"/>
    </location>
</feature>
<feature type="topological domain" description="Cytoplasmic" evidence="6">
    <location>
        <begin position="233"/>
        <end position="250"/>
    </location>
</feature>
<feature type="transmembrane region" description="Helical; Name=Segment S5" evidence="1">
    <location>
        <begin position="251"/>
        <end position="273"/>
    </location>
</feature>
<feature type="topological domain" description="Extracellular" evidence="6">
    <location>
        <begin position="274"/>
        <end position="289"/>
    </location>
</feature>
<feature type="intramembrane region" description="Pore-forming; Name=Segment H5" evidence="1">
    <location>
        <begin position="290"/>
        <end position="310"/>
    </location>
</feature>
<feature type="topological domain" description="Extracellular" evidence="6">
    <location>
        <begin position="311"/>
        <end position="312"/>
    </location>
</feature>
<feature type="transmembrane region" description="Helical; Name=Segment S6" evidence="1">
    <location>
        <begin position="313"/>
        <end position="338"/>
    </location>
</feature>
<feature type="topological domain" description="Cytoplasmic" evidence="6">
    <location>
        <begin position="339"/>
        <end position="652"/>
    </location>
</feature>
<feature type="region of interest" description="Interaction with KCNE3" evidence="1">
    <location>
        <begin position="228"/>
        <end position="236"/>
    </location>
</feature>
<feature type="region of interest" description="Interaction with CALM" evidence="1">
    <location>
        <begin position="360"/>
        <end position="372"/>
    </location>
</feature>
<feature type="region of interest" description="Disordered" evidence="4">
    <location>
        <begin position="393"/>
        <end position="419"/>
    </location>
</feature>
<feature type="region of interest" description="Interaction with CALM; calcium-dependent" evidence="1">
    <location>
        <begin position="504"/>
        <end position="518"/>
    </location>
</feature>
<feature type="region of interest" description="Interaction with KCNE1 C-terminus" evidence="1">
    <location>
        <begin position="524"/>
        <end position="561"/>
    </location>
</feature>
<feature type="region of interest" description="Interaction with AKAP9" evidence="1">
    <location>
        <begin position="577"/>
        <end position="605"/>
    </location>
</feature>
<feature type="region of interest" description="C-terminal assembly domain (tetramerization)" evidence="1">
    <location>
        <begin position="578"/>
        <end position="609"/>
    </location>
</feature>
<feature type="region of interest" description="Disordered" evidence="4">
    <location>
        <begin position="609"/>
        <end position="652"/>
    </location>
</feature>
<feature type="compositionally biased region" description="Basic residues" evidence="4">
    <location>
        <begin position="401"/>
        <end position="414"/>
    </location>
</feature>
<feature type="binding site" evidence="1">
    <location>
        <position position="234"/>
    </location>
    <ligand>
        <name>a 1,2-diacyl-sn-glycero-3-phospho-(1D-myo-inositol-4,5-bisphosphate)</name>
        <dbReference type="ChEBI" id="CHEBI:58456"/>
    </ligand>
</feature>